<reference key="1">
    <citation type="journal article" date="2006" name="Genome Res.">
        <title>Massive genome erosion and functional adaptations provide insights into the symbiotic lifestyle of Sodalis glossinidius in the tsetse host.</title>
        <authorList>
            <person name="Toh H."/>
            <person name="Weiss B.L."/>
            <person name="Perkin S.A.H."/>
            <person name="Yamashita A."/>
            <person name="Oshima K."/>
            <person name="Hattori M."/>
            <person name="Aksoy S."/>
        </authorList>
    </citation>
    <scope>NUCLEOTIDE SEQUENCE [LARGE SCALE GENOMIC DNA]</scope>
    <source>
        <strain>morsitans</strain>
    </source>
</reference>
<accession>Q2NQP3</accession>
<protein>
    <recommendedName>
        <fullName evidence="1">Large ribosomal subunit protein bL36B</fullName>
    </recommendedName>
    <alternativeName>
        <fullName evidence="2">50S ribosomal protein L36 2</fullName>
    </alternativeName>
</protein>
<evidence type="ECO:0000255" key="1">
    <source>
        <dbReference type="HAMAP-Rule" id="MF_00251"/>
    </source>
</evidence>
<evidence type="ECO:0000305" key="2"/>
<keyword id="KW-0687">Ribonucleoprotein</keyword>
<keyword id="KW-0689">Ribosomal protein</keyword>
<organism>
    <name type="scientific">Sodalis glossinidius (strain morsitans)</name>
    <dbReference type="NCBI Taxonomy" id="343509"/>
    <lineage>
        <taxon>Bacteria</taxon>
        <taxon>Pseudomonadati</taxon>
        <taxon>Pseudomonadota</taxon>
        <taxon>Gammaproteobacteria</taxon>
        <taxon>Enterobacterales</taxon>
        <taxon>Bruguierivoracaceae</taxon>
        <taxon>Sodalis</taxon>
    </lineage>
</organism>
<gene>
    <name evidence="1" type="primary">rpmJ2</name>
    <name type="ordered locus">SG2257</name>
</gene>
<dbReference type="EMBL" id="AP008232">
    <property type="protein sequence ID" value="BAE75532.1"/>
    <property type="molecule type" value="Genomic_DNA"/>
</dbReference>
<dbReference type="SMR" id="Q2NQP3"/>
<dbReference type="STRING" id="343509.SG2257"/>
<dbReference type="KEGG" id="sgl:SG2257"/>
<dbReference type="eggNOG" id="COG0257">
    <property type="taxonomic scope" value="Bacteria"/>
</dbReference>
<dbReference type="HOGENOM" id="CLU_135723_6_2_6"/>
<dbReference type="OrthoDB" id="9802520at2"/>
<dbReference type="BioCyc" id="SGLO343509:SGP1_RS28545-MONOMER"/>
<dbReference type="Proteomes" id="UP000001932">
    <property type="component" value="Chromosome"/>
</dbReference>
<dbReference type="GO" id="GO:0005737">
    <property type="term" value="C:cytoplasm"/>
    <property type="evidence" value="ECO:0007669"/>
    <property type="project" value="UniProtKB-ARBA"/>
</dbReference>
<dbReference type="GO" id="GO:1990904">
    <property type="term" value="C:ribonucleoprotein complex"/>
    <property type="evidence" value="ECO:0007669"/>
    <property type="project" value="UniProtKB-KW"/>
</dbReference>
<dbReference type="GO" id="GO:0005840">
    <property type="term" value="C:ribosome"/>
    <property type="evidence" value="ECO:0007669"/>
    <property type="project" value="UniProtKB-KW"/>
</dbReference>
<dbReference type="GO" id="GO:0003735">
    <property type="term" value="F:structural constituent of ribosome"/>
    <property type="evidence" value="ECO:0007669"/>
    <property type="project" value="InterPro"/>
</dbReference>
<dbReference type="GO" id="GO:0006412">
    <property type="term" value="P:translation"/>
    <property type="evidence" value="ECO:0007669"/>
    <property type="project" value="UniProtKB-UniRule"/>
</dbReference>
<dbReference type="HAMAP" id="MF_00251">
    <property type="entry name" value="Ribosomal_bL36"/>
    <property type="match status" value="1"/>
</dbReference>
<dbReference type="InterPro" id="IPR000473">
    <property type="entry name" value="Ribosomal_bL36"/>
</dbReference>
<dbReference type="InterPro" id="IPR035977">
    <property type="entry name" value="Ribosomal_bL36_sp"/>
</dbReference>
<dbReference type="NCBIfam" id="TIGR01022">
    <property type="entry name" value="rpmJ_bact"/>
    <property type="match status" value="1"/>
</dbReference>
<dbReference type="PANTHER" id="PTHR42888">
    <property type="entry name" value="50S RIBOSOMAL PROTEIN L36, CHLOROPLASTIC"/>
    <property type="match status" value="1"/>
</dbReference>
<dbReference type="PANTHER" id="PTHR42888:SF1">
    <property type="entry name" value="LARGE RIBOSOMAL SUBUNIT PROTEIN BL36C"/>
    <property type="match status" value="1"/>
</dbReference>
<dbReference type="Pfam" id="PF00444">
    <property type="entry name" value="Ribosomal_L36"/>
    <property type="match status" value="1"/>
</dbReference>
<dbReference type="SUPFAM" id="SSF57840">
    <property type="entry name" value="Ribosomal protein L36"/>
    <property type="match status" value="1"/>
</dbReference>
<dbReference type="PROSITE" id="PS00828">
    <property type="entry name" value="RIBOSOMAL_L36"/>
    <property type="match status" value="1"/>
</dbReference>
<sequence length="38" mass="4349">MKVRASVKKLCRNCKIVKRNGVVRVICSAEPKHKQRQG</sequence>
<proteinExistence type="inferred from homology"/>
<comment type="similarity">
    <text evidence="1">Belongs to the bacterial ribosomal protein bL36 family.</text>
</comment>
<name>RL362_SODGM</name>
<feature type="chain" id="PRO_0000344721" description="Large ribosomal subunit protein bL36B">
    <location>
        <begin position="1"/>
        <end position="38"/>
    </location>
</feature>